<accession>Q48U93</accession>
<name>RL35_STRPM</name>
<dbReference type="EMBL" id="CP000056">
    <property type="protein sequence ID" value="AAX71713.1"/>
    <property type="molecule type" value="Genomic_DNA"/>
</dbReference>
<dbReference type="RefSeq" id="WP_002985151.1">
    <property type="nucleotide sequence ID" value="NC_007296.2"/>
</dbReference>
<dbReference type="SMR" id="Q48U93"/>
<dbReference type="GeneID" id="83690415"/>
<dbReference type="KEGG" id="spb:M28_Spy0599"/>
<dbReference type="HOGENOM" id="CLU_169643_3_1_9"/>
<dbReference type="GO" id="GO:0022625">
    <property type="term" value="C:cytosolic large ribosomal subunit"/>
    <property type="evidence" value="ECO:0007669"/>
    <property type="project" value="TreeGrafter"/>
</dbReference>
<dbReference type="GO" id="GO:0003735">
    <property type="term" value="F:structural constituent of ribosome"/>
    <property type="evidence" value="ECO:0007669"/>
    <property type="project" value="InterPro"/>
</dbReference>
<dbReference type="GO" id="GO:0006412">
    <property type="term" value="P:translation"/>
    <property type="evidence" value="ECO:0007669"/>
    <property type="project" value="UniProtKB-UniRule"/>
</dbReference>
<dbReference type="FunFam" id="4.10.410.60:FF:000001">
    <property type="entry name" value="50S ribosomal protein L35"/>
    <property type="match status" value="1"/>
</dbReference>
<dbReference type="Gene3D" id="4.10.410.60">
    <property type="match status" value="1"/>
</dbReference>
<dbReference type="HAMAP" id="MF_00514">
    <property type="entry name" value="Ribosomal_bL35"/>
    <property type="match status" value="1"/>
</dbReference>
<dbReference type="InterPro" id="IPR001706">
    <property type="entry name" value="Ribosomal_bL35"/>
</dbReference>
<dbReference type="InterPro" id="IPR021137">
    <property type="entry name" value="Ribosomal_bL35-like"/>
</dbReference>
<dbReference type="InterPro" id="IPR018265">
    <property type="entry name" value="Ribosomal_bL35_CS"/>
</dbReference>
<dbReference type="InterPro" id="IPR037229">
    <property type="entry name" value="Ribosomal_bL35_sf"/>
</dbReference>
<dbReference type="NCBIfam" id="TIGR00001">
    <property type="entry name" value="rpmI_bact"/>
    <property type="match status" value="1"/>
</dbReference>
<dbReference type="PANTHER" id="PTHR33343">
    <property type="entry name" value="54S RIBOSOMAL PROTEIN BL35M"/>
    <property type="match status" value="1"/>
</dbReference>
<dbReference type="PANTHER" id="PTHR33343:SF1">
    <property type="entry name" value="LARGE RIBOSOMAL SUBUNIT PROTEIN BL35M"/>
    <property type="match status" value="1"/>
</dbReference>
<dbReference type="Pfam" id="PF01632">
    <property type="entry name" value="Ribosomal_L35p"/>
    <property type="match status" value="1"/>
</dbReference>
<dbReference type="PRINTS" id="PR00064">
    <property type="entry name" value="RIBOSOMALL35"/>
</dbReference>
<dbReference type="SUPFAM" id="SSF143034">
    <property type="entry name" value="L35p-like"/>
    <property type="match status" value="1"/>
</dbReference>
<dbReference type="PROSITE" id="PS00936">
    <property type="entry name" value="RIBOSOMAL_L35"/>
    <property type="match status" value="1"/>
</dbReference>
<reference key="1">
    <citation type="journal article" date="2005" name="J. Infect. Dis.">
        <title>Genome sequence of a serotype M28 strain of group A Streptococcus: potential new insights into puerperal sepsis and bacterial disease specificity.</title>
        <authorList>
            <person name="Green N.M."/>
            <person name="Zhang S."/>
            <person name="Porcella S.F."/>
            <person name="Nagiec M.J."/>
            <person name="Barbian K.D."/>
            <person name="Beres S.B."/>
            <person name="Lefebvre R.B."/>
            <person name="Musser J.M."/>
        </authorList>
    </citation>
    <scope>NUCLEOTIDE SEQUENCE [LARGE SCALE GENOMIC DNA]</scope>
    <source>
        <strain>MGAS6180</strain>
    </source>
</reference>
<comment type="similarity">
    <text evidence="1">Belongs to the bacterial ribosomal protein bL35 family.</text>
</comment>
<evidence type="ECO:0000255" key="1">
    <source>
        <dbReference type="HAMAP-Rule" id="MF_00514"/>
    </source>
</evidence>
<evidence type="ECO:0000256" key="2">
    <source>
        <dbReference type="SAM" id="MobiDB-lite"/>
    </source>
</evidence>
<evidence type="ECO:0000305" key="3"/>
<feature type="chain" id="PRO_0000258765" description="Large ribosomal subunit protein bL35">
    <location>
        <begin position="1"/>
        <end position="65"/>
    </location>
</feature>
<feature type="region of interest" description="Disordered" evidence="2">
    <location>
        <begin position="1"/>
        <end position="20"/>
    </location>
</feature>
<feature type="compositionally biased region" description="Basic residues" evidence="2">
    <location>
        <begin position="1"/>
        <end position="16"/>
    </location>
</feature>
<gene>
    <name evidence="1" type="primary">rpmI</name>
    <name type="ordered locus">M28_Spy0599</name>
</gene>
<proteinExistence type="inferred from homology"/>
<sequence>MPKQKTHRASAKRFKRTGSGGLKRFRAFTSHRFHGKTKKQRRHLRKAGLVSSGDFKRIKAMVTGL</sequence>
<organism>
    <name type="scientific">Streptococcus pyogenes serotype M28 (strain MGAS6180)</name>
    <dbReference type="NCBI Taxonomy" id="319701"/>
    <lineage>
        <taxon>Bacteria</taxon>
        <taxon>Bacillati</taxon>
        <taxon>Bacillota</taxon>
        <taxon>Bacilli</taxon>
        <taxon>Lactobacillales</taxon>
        <taxon>Streptococcaceae</taxon>
        <taxon>Streptococcus</taxon>
    </lineage>
</organism>
<keyword id="KW-0687">Ribonucleoprotein</keyword>
<keyword id="KW-0689">Ribosomal protein</keyword>
<protein>
    <recommendedName>
        <fullName evidence="1">Large ribosomal subunit protein bL35</fullName>
    </recommendedName>
    <alternativeName>
        <fullName evidence="3">50S ribosomal protein L35</fullName>
    </alternativeName>
</protein>